<comment type="function">
    <text evidence="1">Catalyzes the phosphorylation of pantothenate (Pan), the first step in CoA biosynthesis.</text>
</comment>
<comment type="catalytic activity">
    <reaction evidence="1">
        <text>(R)-pantothenate + ATP = (R)-4'-phosphopantothenate + ADP + H(+)</text>
        <dbReference type="Rhea" id="RHEA:16373"/>
        <dbReference type="ChEBI" id="CHEBI:10986"/>
        <dbReference type="ChEBI" id="CHEBI:15378"/>
        <dbReference type="ChEBI" id="CHEBI:29032"/>
        <dbReference type="ChEBI" id="CHEBI:30616"/>
        <dbReference type="ChEBI" id="CHEBI:456216"/>
        <dbReference type="EC" id="2.7.1.33"/>
    </reaction>
</comment>
<comment type="cofactor">
    <cofactor evidence="1">
        <name>NH4(+)</name>
        <dbReference type="ChEBI" id="CHEBI:28938"/>
    </cofactor>
    <cofactor evidence="1">
        <name>K(+)</name>
        <dbReference type="ChEBI" id="CHEBI:29103"/>
    </cofactor>
    <text evidence="1">A monovalent cation. Ammonium or potassium.</text>
</comment>
<comment type="pathway">
    <text evidence="1">Cofactor biosynthesis; coenzyme A biosynthesis; CoA from (R)-pantothenate: step 1/5.</text>
</comment>
<comment type="subunit">
    <text evidence="1">Homodimer.</text>
</comment>
<comment type="subcellular location">
    <subcellularLocation>
        <location evidence="1">Cytoplasm</location>
    </subcellularLocation>
</comment>
<comment type="similarity">
    <text evidence="1">Belongs to the type III pantothenate kinase family.</text>
</comment>
<dbReference type="EC" id="2.7.1.33" evidence="1"/>
<dbReference type="EMBL" id="CP000356">
    <property type="protein sequence ID" value="ABF53008.1"/>
    <property type="molecule type" value="Genomic_DNA"/>
</dbReference>
<dbReference type="RefSeq" id="WP_011541591.1">
    <property type="nucleotide sequence ID" value="NC_008048.1"/>
</dbReference>
<dbReference type="SMR" id="Q1GTL4"/>
<dbReference type="STRING" id="317655.Sala_1294"/>
<dbReference type="KEGG" id="sal:Sala_1294"/>
<dbReference type="eggNOG" id="COG1521">
    <property type="taxonomic scope" value="Bacteria"/>
</dbReference>
<dbReference type="HOGENOM" id="CLU_066627_1_0_5"/>
<dbReference type="OrthoDB" id="9804707at2"/>
<dbReference type="UniPathway" id="UPA00241">
    <property type="reaction ID" value="UER00352"/>
</dbReference>
<dbReference type="Proteomes" id="UP000006578">
    <property type="component" value="Chromosome"/>
</dbReference>
<dbReference type="GO" id="GO:0005737">
    <property type="term" value="C:cytoplasm"/>
    <property type="evidence" value="ECO:0007669"/>
    <property type="project" value="UniProtKB-SubCell"/>
</dbReference>
<dbReference type="GO" id="GO:0005524">
    <property type="term" value="F:ATP binding"/>
    <property type="evidence" value="ECO:0007669"/>
    <property type="project" value="UniProtKB-UniRule"/>
</dbReference>
<dbReference type="GO" id="GO:0004594">
    <property type="term" value="F:pantothenate kinase activity"/>
    <property type="evidence" value="ECO:0007669"/>
    <property type="project" value="UniProtKB-UniRule"/>
</dbReference>
<dbReference type="GO" id="GO:0015937">
    <property type="term" value="P:coenzyme A biosynthetic process"/>
    <property type="evidence" value="ECO:0007669"/>
    <property type="project" value="UniProtKB-UniRule"/>
</dbReference>
<dbReference type="CDD" id="cd24015">
    <property type="entry name" value="ASKHA_NBD_PanK-III"/>
    <property type="match status" value="1"/>
</dbReference>
<dbReference type="Gene3D" id="3.30.420.40">
    <property type="match status" value="2"/>
</dbReference>
<dbReference type="HAMAP" id="MF_01274">
    <property type="entry name" value="Pantothen_kinase_3"/>
    <property type="match status" value="1"/>
</dbReference>
<dbReference type="InterPro" id="IPR043129">
    <property type="entry name" value="ATPase_NBD"/>
</dbReference>
<dbReference type="InterPro" id="IPR004619">
    <property type="entry name" value="Type_III_PanK"/>
</dbReference>
<dbReference type="NCBIfam" id="TIGR00671">
    <property type="entry name" value="baf"/>
    <property type="match status" value="1"/>
</dbReference>
<dbReference type="NCBIfam" id="NF009844">
    <property type="entry name" value="PRK13318.1-2"/>
    <property type="match status" value="1"/>
</dbReference>
<dbReference type="NCBIfam" id="NF009848">
    <property type="entry name" value="PRK13318.1-6"/>
    <property type="match status" value="1"/>
</dbReference>
<dbReference type="NCBIfam" id="NF009855">
    <property type="entry name" value="PRK13321.1"/>
    <property type="match status" value="1"/>
</dbReference>
<dbReference type="PANTHER" id="PTHR34265">
    <property type="entry name" value="TYPE III PANTOTHENATE KINASE"/>
    <property type="match status" value="1"/>
</dbReference>
<dbReference type="PANTHER" id="PTHR34265:SF1">
    <property type="entry name" value="TYPE III PANTOTHENATE KINASE"/>
    <property type="match status" value="1"/>
</dbReference>
<dbReference type="Pfam" id="PF03309">
    <property type="entry name" value="Pan_kinase"/>
    <property type="match status" value="1"/>
</dbReference>
<dbReference type="SUPFAM" id="SSF53067">
    <property type="entry name" value="Actin-like ATPase domain"/>
    <property type="match status" value="2"/>
</dbReference>
<reference key="1">
    <citation type="journal article" date="2009" name="Proc. Natl. Acad. Sci. U.S.A.">
        <title>The genomic basis of trophic strategy in marine bacteria.</title>
        <authorList>
            <person name="Lauro F.M."/>
            <person name="McDougald D."/>
            <person name="Thomas T."/>
            <person name="Williams T.J."/>
            <person name="Egan S."/>
            <person name="Rice S."/>
            <person name="DeMaere M.Z."/>
            <person name="Ting L."/>
            <person name="Ertan H."/>
            <person name="Johnson J."/>
            <person name="Ferriera S."/>
            <person name="Lapidus A."/>
            <person name="Anderson I."/>
            <person name="Kyrpides N."/>
            <person name="Munk A.C."/>
            <person name="Detter C."/>
            <person name="Han C.S."/>
            <person name="Brown M.V."/>
            <person name="Robb F.T."/>
            <person name="Kjelleberg S."/>
            <person name="Cavicchioli R."/>
        </authorList>
    </citation>
    <scope>NUCLEOTIDE SEQUENCE [LARGE SCALE GENOMIC DNA]</scope>
    <source>
        <strain>DSM 13593 / LMG 18877 / RB2256</strain>
    </source>
</reference>
<name>COAX_SPHAL</name>
<protein>
    <recommendedName>
        <fullName evidence="1">Type III pantothenate kinase</fullName>
        <ecNumber evidence="1">2.7.1.33</ecNumber>
    </recommendedName>
    <alternativeName>
        <fullName evidence="1">PanK-III</fullName>
    </alternativeName>
    <alternativeName>
        <fullName evidence="1">Pantothenic acid kinase</fullName>
    </alternativeName>
</protein>
<evidence type="ECO:0000255" key="1">
    <source>
        <dbReference type="HAMAP-Rule" id="MF_01274"/>
    </source>
</evidence>
<keyword id="KW-0067">ATP-binding</keyword>
<keyword id="KW-0173">Coenzyme A biosynthesis</keyword>
<keyword id="KW-0963">Cytoplasm</keyword>
<keyword id="KW-0418">Kinase</keyword>
<keyword id="KW-0547">Nucleotide-binding</keyword>
<keyword id="KW-0630">Potassium</keyword>
<keyword id="KW-1185">Reference proteome</keyword>
<keyword id="KW-0808">Transferase</keyword>
<sequence>MLLAIDVGNTNAKFALFRGAELLARWRIATDDRRTADEYMVWLDQLMRIEGYDRGDVDAVIISTVVPRALHNLQLLAHKYFGVDALVAGREPVTWGIALKVDEPQSVGADRAVNAIAAQAVEPGRDKLVISFGTATTLDHIGPDGAYLGGIIAPGVNLSLEALVAAAAKLPRIAIEAPASASVIGRTTESQMLIGVYWGYVAMIEGLIARMKAQIGKPLVVVATGGLATLFQEQAHLFDRIEPDLTLNGLMHLYNQGQQKI</sequence>
<feature type="chain" id="PRO_0000267589" description="Type III pantothenate kinase">
    <location>
        <begin position="1"/>
        <end position="261"/>
    </location>
</feature>
<feature type="active site" description="Proton acceptor" evidence="1">
    <location>
        <position position="110"/>
    </location>
</feature>
<feature type="binding site" evidence="1">
    <location>
        <begin position="6"/>
        <end position="13"/>
    </location>
    <ligand>
        <name>ATP</name>
        <dbReference type="ChEBI" id="CHEBI:30616"/>
    </ligand>
</feature>
<feature type="binding site" evidence="1">
    <location>
        <begin position="108"/>
        <end position="111"/>
    </location>
    <ligand>
        <name>substrate</name>
    </ligand>
</feature>
<feature type="binding site" evidence="1">
    <location>
        <position position="134"/>
    </location>
    <ligand>
        <name>ATP</name>
        <dbReference type="ChEBI" id="CHEBI:30616"/>
    </ligand>
</feature>
<feature type="binding site" evidence="1">
    <location>
        <position position="188"/>
    </location>
    <ligand>
        <name>substrate</name>
    </ligand>
</feature>
<gene>
    <name evidence="1" type="primary">coaX</name>
    <name type="ordered locus">Sala_1294</name>
</gene>
<accession>Q1GTL4</accession>
<proteinExistence type="inferred from homology"/>
<organism>
    <name type="scientific">Sphingopyxis alaskensis (strain DSM 13593 / LMG 18877 / RB2256)</name>
    <name type="common">Sphingomonas alaskensis</name>
    <dbReference type="NCBI Taxonomy" id="317655"/>
    <lineage>
        <taxon>Bacteria</taxon>
        <taxon>Pseudomonadati</taxon>
        <taxon>Pseudomonadota</taxon>
        <taxon>Alphaproteobacteria</taxon>
        <taxon>Sphingomonadales</taxon>
        <taxon>Sphingomonadaceae</taxon>
        <taxon>Sphingopyxis</taxon>
    </lineage>
</organism>